<evidence type="ECO:0000255" key="1">
    <source>
        <dbReference type="HAMAP-Rule" id="MF_03116"/>
    </source>
</evidence>
<reference key="1">
    <citation type="submission" date="2009-02" db="EMBL/GenBank/DDBJ databases">
        <title>The genome sequence of Ajellomyces capsulatus strain G186AR.</title>
        <authorList>
            <person name="Champion M."/>
            <person name="Cuomo C.A."/>
            <person name="Ma L.-J."/>
            <person name="Henn M.R."/>
            <person name="Sil A."/>
            <person name="Goldman B."/>
            <person name="Young S.K."/>
            <person name="Kodira C.D."/>
            <person name="Zeng Q."/>
            <person name="Koehrsen M."/>
            <person name="Alvarado L."/>
            <person name="Berlin A."/>
            <person name="Borenstein D."/>
            <person name="Chen Z."/>
            <person name="Engels R."/>
            <person name="Freedman E."/>
            <person name="Gellesch M."/>
            <person name="Goldberg J."/>
            <person name="Griggs A."/>
            <person name="Gujja S."/>
            <person name="Heiman D."/>
            <person name="Hepburn T."/>
            <person name="Howarth C."/>
            <person name="Jen D."/>
            <person name="Larson L."/>
            <person name="Lewis B."/>
            <person name="Mehta T."/>
            <person name="Park D."/>
            <person name="Pearson M."/>
            <person name="Roberts A."/>
            <person name="Saif S."/>
            <person name="Shea T."/>
            <person name="Shenoy N."/>
            <person name="Sisk P."/>
            <person name="Stolte C."/>
            <person name="Sykes S."/>
            <person name="Walk T."/>
            <person name="White J."/>
            <person name="Yandava C."/>
            <person name="Klein B."/>
            <person name="McEwen J.G."/>
            <person name="Puccia R."/>
            <person name="Goldman G.H."/>
            <person name="Felipe M.S."/>
            <person name="Nino-Vega G."/>
            <person name="San-Blas G."/>
            <person name="Taylor J."/>
            <person name="Mendoza L."/>
            <person name="Galagan J.E."/>
            <person name="Nusbaum C."/>
            <person name="Birren B.W."/>
        </authorList>
    </citation>
    <scope>NUCLEOTIDE SEQUENCE [LARGE SCALE GENOMIC DNA]</scope>
    <source>
        <strain>G186AR / H82 / ATCC MYA-2454 / RMSCC 2432</strain>
    </source>
</reference>
<sequence>MAAIKDENNDHLVQSDNPEHPSNLIPALCRNFYSHGWVTGTGGGASIKRDNHIFIAPSGVQKELIQPHDIFVLQYPTPKYPPSARQYIRKPVELKPSACTPLFLAAFDRGAGCCIHTHSQWAVLVTLLVEREKGPEGCFEISNIEQIKGIPRGKGKGMLGFFDTLKIPIIENTAFEEDLTSSLEEAMEKYPDTYAVLVRRHGIYVWGDDVAKAKTQCESLDYLFQLAVEMHKLGLPWVKS</sequence>
<proteinExistence type="inferred from homology"/>
<comment type="function">
    <text evidence="1">Catalyzes the dehydration of methylthioribulose-1-phosphate (MTRu-1-P) into 2,3-diketo-5-methylthiopentyl-1-phosphate (DK-MTP-1-P).</text>
</comment>
<comment type="catalytic activity">
    <reaction evidence="1">
        <text>5-(methylsulfanyl)-D-ribulose 1-phosphate = 5-methylsulfanyl-2,3-dioxopentyl phosphate + H2O</text>
        <dbReference type="Rhea" id="RHEA:15549"/>
        <dbReference type="ChEBI" id="CHEBI:15377"/>
        <dbReference type="ChEBI" id="CHEBI:58548"/>
        <dbReference type="ChEBI" id="CHEBI:58828"/>
        <dbReference type="EC" id="4.2.1.109"/>
    </reaction>
</comment>
<comment type="cofactor">
    <cofactor evidence="1">
        <name>Zn(2+)</name>
        <dbReference type="ChEBI" id="CHEBI:29105"/>
    </cofactor>
    <text evidence="1">Binds 1 zinc ion per subunit.</text>
</comment>
<comment type="pathway">
    <text evidence="1">Amino-acid biosynthesis; L-methionine biosynthesis via salvage pathway; L-methionine from S-methyl-5-thio-alpha-D-ribose 1-phosphate: step 2/6.</text>
</comment>
<comment type="subcellular location">
    <subcellularLocation>
        <location evidence="1">Cytoplasm</location>
    </subcellularLocation>
</comment>
<comment type="similarity">
    <text evidence="1">Belongs to the aldolase class II family. MtnB subfamily.</text>
</comment>
<accession>C0NN25</accession>
<gene>
    <name evidence="1" type="primary">MDE1</name>
    <name type="ORF">HCBG_04152</name>
</gene>
<feature type="chain" id="PRO_0000393799" description="Methylthioribulose-1-phosphate dehydratase">
    <location>
        <begin position="1"/>
        <end position="240"/>
    </location>
</feature>
<feature type="active site" description="Proton donor/acceptor" evidence="1">
    <location>
        <position position="145"/>
    </location>
</feature>
<feature type="binding site" evidence="1">
    <location>
        <position position="99"/>
    </location>
    <ligand>
        <name>substrate</name>
    </ligand>
</feature>
<feature type="binding site" evidence="1">
    <location>
        <position position="116"/>
    </location>
    <ligand>
        <name>Zn(2+)</name>
        <dbReference type="ChEBI" id="CHEBI:29105"/>
    </ligand>
</feature>
<feature type="binding site" evidence="1">
    <location>
        <position position="118"/>
    </location>
    <ligand>
        <name>Zn(2+)</name>
        <dbReference type="ChEBI" id="CHEBI:29105"/>
    </ligand>
</feature>
<feature type="binding site" evidence="1">
    <location>
        <position position="201"/>
    </location>
    <ligand>
        <name>Zn(2+)</name>
        <dbReference type="ChEBI" id="CHEBI:29105"/>
    </ligand>
</feature>
<keyword id="KW-0028">Amino-acid biosynthesis</keyword>
<keyword id="KW-0963">Cytoplasm</keyword>
<keyword id="KW-0456">Lyase</keyword>
<keyword id="KW-0479">Metal-binding</keyword>
<keyword id="KW-0486">Methionine biosynthesis</keyword>
<keyword id="KW-1185">Reference proteome</keyword>
<keyword id="KW-0862">Zinc</keyword>
<protein>
    <recommendedName>
        <fullName evidence="1">Methylthioribulose-1-phosphate dehydratase</fullName>
        <shortName evidence="1">MTRu-1-P dehydratase</shortName>
        <ecNumber evidence="1">4.2.1.109</ecNumber>
    </recommendedName>
</protein>
<dbReference type="EC" id="4.2.1.109" evidence="1"/>
<dbReference type="EMBL" id="GG663367">
    <property type="protein sequence ID" value="EEH07273.1"/>
    <property type="molecule type" value="Genomic_DNA"/>
</dbReference>
<dbReference type="SMR" id="C0NN25"/>
<dbReference type="FunCoup" id="C0NN25">
    <property type="interactions" value="234"/>
</dbReference>
<dbReference type="STRING" id="447093.C0NN25"/>
<dbReference type="VEuPathDB" id="FungiDB:I7I50_11754"/>
<dbReference type="HOGENOM" id="CLU_006033_4_0_1"/>
<dbReference type="InParanoid" id="C0NN25"/>
<dbReference type="UniPathway" id="UPA00904">
    <property type="reaction ID" value="UER00875"/>
</dbReference>
<dbReference type="Proteomes" id="UP000001631">
    <property type="component" value="Unassembled WGS sequence"/>
</dbReference>
<dbReference type="GO" id="GO:0005737">
    <property type="term" value="C:cytoplasm"/>
    <property type="evidence" value="ECO:0007669"/>
    <property type="project" value="UniProtKB-SubCell"/>
</dbReference>
<dbReference type="GO" id="GO:0046570">
    <property type="term" value="F:methylthioribulose 1-phosphate dehydratase activity"/>
    <property type="evidence" value="ECO:0007669"/>
    <property type="project" value="UniProtKB-UniRule"/>
</dbReference>
<dbReference type="GO" id="GO:0008270">
    <property type="term" value="F:zinc ion binding"/>
    <property type="evidence" value="ECO:0007669"/>
    <property type="project" value="UniProtKB-UniRule"/>
</dbReference>
<dbReference type="GO" id="GO:0019509">
    <property type="term" value="P:L-methionine salvage from methylthioadenosine"/>
    <property type="evidence" value="ECO:0007669"/>
    <property type="project" value="UniProtKB-UniRule"/>
</dbReference>
<dbReference type="FunFam" id="3.40.225.10:FF:000003">
    <property type="entry name" value="Methylthioribulose-1-phosphate dehydratase"/>
    <property type="match status" value="1"/>
</dbReference>
<dbReference type="Gene3D" id="3.40.225.10">
    <property type="entry name" value="Class II aldolase/adducin N-terminal domain"/>
    <property type="match status" value="1"/>
</dbReference>
<dbReference type="HAMAP" id="MF_03116">
    <property type="entry name" value="Salvage_MtnB_euk"/>
    <property type="match status" value="1"/>
</dbReference>
<dbReference type="InterPro" id="IPR001303">
    <property type="entry name" value="Aldolase_II/adducin_N"/>
</dbReference>
<dbReference type="InterPro" id="IPR036409">
    <property type="entry name" value="Aldolase_II/adducin_N_sf"/>
</dbReference>
<dbReference type="InterPro" id="IPR017714">
    <property type="entry name" value="MethylthioRu-1-P_deHdtase_MtnB"/>
</dbReference>
<dbReference type="InterPro" id="IPR027514">
    <property type="entry name" value="Salvage_MtnB_euk"/>
</dbReference>
<dbReference type="NCBIfam" id="TIGR03328">
    <property type="entry name" value="salvage_mtnB"/>
    <property type="match status" value="1"/>
</dbReference>
<dbReference type="PANTHER" id="PTHR10640">
    <property type="entry name" value="METHYLTHIORIBULOSE-1-PHOSPHATE DEHYDRATASE"/>
    <property type="match status" value="1"/>
</dbReference>
<dbReference type="PANTHER" id="PTHR10640:SF7">
    <property type="entry name" value="METHYLTHIORIBULOSE-1-PHOSPHATE DEHYDRATASE"/>
    <property type="match status" value="1"/>
</dbReference>
<dbReference type="Pfam" id="PF00596">
    <property type="entry name" value="Aldolase_II"/>
    <property type="match status" value="1"/>
</dbReference>
<dbReference type="SMART" id="SM01007">
    <property type="entry name" value="Aldolase_II"/>
    <property type="match status" value="1"/>
</dbReference>
<dbReference type="SUPFAM" id="SSF53639">
    <property type="entry name" value="AraD/HMP-PK domain-like"/>
    <property type="match status" value="1"/>
</dbReference>
<name>MTNB_AJECG</name>
<organism>
    <name type="scientific">Ajellomyces capsulatus (strain G186AR / H82 / ATCC MYA-2454 / RMSCC 2432)</name>
    <name type="common">Darling's disease fungus</name>
    <name type="synonym">Histoplasma capsulatum</name>
    <dbReference type="NCBI Taxonomy" id="447093"/>
    <lineage>
        <taxon>Eukaryota</taxon>
        <taxon>Fungi</taxon>
        <taxon>Dikarya</taxon>
        <taxon>Ascomycota</taxon>
        <taxon>Pezizomycotina</taxon>
        <taxon>Eurotiomycetes</taxon>
        <taxon>Eurotiomycetidae</taxon>
        <taxon>Onygenales</taxon>
        <taxon>Ajellomycetaceae</taxon>
        <taxon>Histoplasma</taxon>
    </lineage>
</organism>